<feature type="chain" id="PRO_0000431228" description="Carrot ABA-induced in somatic embryos 3">
    <location>
        <begin position="1"/>
        <end position="113"/>
    </location>
</feature>
<feature type="region of interest" description="Disordered" evidence="1">
    <location>
        <begin position="1"/>
        <end position="113"/>
    </location>
</feature>
<feature type="compositionally biased region" description="Basic and acidic residues" evidence="1">
    <location>
        <begin position="1"/>
        <end position="17"/>
    </location>
</feature>
<feature type="compositionally biased region" description="Basic and acidic residues" evidence="1">
    <location>
        <begin position="32"/>
        <end position="52"/>
    </location>
</feature>
<feature type="compositionally biased region" description="Basic and acidic residues" evidence="1">
    <location>
        <begin position="65"/>
        <end position="77"/>
    </location>
</feature>
<gene>
    <name evidence="3" type="primary">CAISE3</name>
</gene>
<dbReference type="EMBL" id="AB105041">
    <property type="protein sequence ID" value="BAD86646.1"/>
    <property type="molecule type" value="mRNA"/>
</dbReference>
<dbReference type="OMA" id="HERYSEM"/>
<dbReference type="GO" id="GO:0005829">
    <property type="term" value="C:cytosol"/>
    <property type="evidence" value="ECO:0007669"/>
    <property type="project" value="TreeGrafter"/>
</dbReference>
<dbReference type="GO" id="GO:0009737">
    <property type="term" value="P:response to abscisic acid"/>
    <property type="evidence" value="ECO:0007669"/>
    <property type="project" value="TreeGrafter"/>
</dbReference>
<dbReference type="InterPro" id="IPR038956">
    <property type="entry name" value="LEA_5"/>
</dbReference>
<dbReference type="InterPro" id="IPR022377">
    <property type="entry name" value="Sm_Hydphi_plant_seed_CS"/>
</dbReference>
<dbReference type="InterPro" id="IPR000389">
    <property type="entry name" value="Small_hydrophilic_seed_prot"/>
</dbReference>
<dbReference type="PANTHER" id="PTHR34671">
    <property type="entry name" value="EM-LIKE PROTEIN GEA1"/>
    <property type="match status" value="1"/>
</dbReference>
<dbReference type="PANTHER" id="PTHR34671:SF19">
    <property type="entry name" value="EMBRYONIC ABUNDANT PROTEIN 1"/>
    <property type="match status" value="1"/>
</dbReference>
<dbReference type="Pfam" id="PF00477">
    <property type="entry name" value="LEA_5"/>
    <property type="match status" value="1"/>
</dbReference>
<dbReference type="PROSITE" id="PS00431">
    <property type="entry name" value="SMALL_HYDR_PLANT_SEED"/>
    <property type="match status" value="1"/>
</dbReference>
<sequence>MASGQEKRSELDARAKQGETVVPGGTGGKSLEAQEHLAEGRSKGGHTRKEQLGTEGYQEIGTKGGETRREQMGKEGYEQMGRMGGLATKDKSGAERAEEEGIDIDQSKFRTKS</sequence>
<protein>
    <recommendedName>
        <fullName evidence="3">Carrot ABA-induced in somatic embryos 3</fullName>
    </recommendedName>
    <alternativeName>
        <fullName evidence="5">Em-like protein</fullName>
    </alternativeName>
</protein>
<evidence type="ECO:0000256" key="1">
    <source>
        <dbReference type="SAM" id="MobiDB-lite"/>
    </source>
</evidence>
<evidence type="ECO:0000269" key="2">
    <source ref="1"/>
</evidence>
<evidence type="ECO:0000303" key="3">
    <source ref="1"/>
</evidence>
<evidence type="ECO:0000305" key="4"/>
<evidence type="ECO:0000312" key="5">
    <source>
        <dbReference type="EMBL" id="BAD86646.1"/>
    </source>
</evidence>
<comment type="tissue specificity">
    <text evidence="2">Expressed in embryogenic cells, somatic embryos and seeds at the later stages of development. Not detected in leaves.</text>
</comment>
<comment type="induction">
    <text evidence="2">Up-regulated by abscisic acid.</text>
</comment>
<comment type="similarity">
    <text evidence="4">Belongs to the small hydrophilic plant seed protein family.</text>
</comment>
<reference key="1">
    <citation type="journal article" date="2004" name="Plant Biotechnol. (Sheffield)">
        <title>Isolation and characterization of six abscisic acid-inducible genes from carrot somatic embryos.</title>
        <authorList>
            <person name="Shiota H."/>
            <person name="Yang G."/>
            <person name="Shen S."/>
            <person name="Eun C.H."/>
            <person name="Watabe K."/>
            <person name="Tanaka I."/>
            <person name="Kamada H."/>
        </authorList>
    </citation>
    <scope>NUCLEOTIDE SEQUENCE [MRNA]</scope>
    <scope>INDUCTION BY ABSCISIC ACID</scope>
    <scope>TISSUE SPECIFICITY</scope>
    <source>
        <strain>cv. US-Harumakigosun</strain>
        <tissue>Somatic embryo</tissue>
    </source>
</reference>
<accession>Q5KTS7</accession>
<organism evidence="5">
    <name type="scientific">Daucus carota</name>
    <name type="common">Wild carrot</name>
    <dbReference type="NCBI Taxonomy" id="4039"/>
    <lineage>
        <taxon>Eukaryota</taxon>
        <taxon>Viridiplantae</taxon>
        <taxon>Streptophyta</taxon>
        <taxon>Embryophyta</taxon>
        <taxon>Tracheophyta</taxon>
        <taxon>Spermatophyta</taxon>
        <taxon>Magnoliopsida</taxon>
        <taxon>eudicotyledons</taxon>
        <taxon>Gunneridae</taxon>
        <taxon>Pentapetalae</taxon>
        <taxon>asterids</taxon>
        <taxon>campanulids</taxon>
        <taxon>Apiales</taxon>
        <taxon>Apiaceae</taxon>
        <taxon>Apioideae</taxon>
        <taxon>Scandiceae</taxon>
        <taxon>Daucinae</taxon>
        <taxon>Daucus</taxon>
        <taxon>Daucus sect. Daucus</taxon>
    </lineage>
</organism>
<proteinExistence type="evidence at transcript level"/>
<name>EML_DAUCA</name>